<dbReference type="EMBL" id="U18530">
    <property type="protein sequence ID" value="AAB64499.1"/>
    <property type="molecule type" value="Genomic_DNA"/>
</dbReference>
<dbReference type="EMBL" id="BK006939">
    <property type="protein sequence ID" value="DAA07630.1"/>
    <property type="molecule type" value="Genomic_DNA"/>
</dbReference>
<dbReference type="PIR" id="S50437">
    <property type="entry name" value="S50437"/>
</dbReference>
<dbReference type="RefSeq" id="NP_010892.1">
    <property type="nucleotide sequence ID" value="NM_001178837.1"/>
</dbReference>
<dbReference type="PDB" id="1KU1">
    <property type="method" value="X-ray"/>
    <property type="resolution" value="1.93 A"/>
    <property type="chains" value="A/B=558-766"/>
</dbReference>
<dbReference type="PDB" id="7URO">
    <property type="method" value="EM"/>
    <property type="resolution" value="4.20 A"/>
    <property type="chains" value="A/C=1-1459"/>
</dbReference>
<dbReference type="PDB" id="7URR">
    <property type="method" value="EM"/>
    <property type="resolution" value="4.70 A"/>
    <property type="chains" value="A/B=1-1459"/>
</dbReference>
<dbReference type="PDB" id="7UT4">
    <property type="method" value="EM"/>
    <property type="resolution" value="3.90 A"/>
    <property type="chains" value="A/B=1-1459"/>
</dbReference>
<dbReference type="PDB" id="7UTH">
    <property type="method" value="EM"/>
    <property type="resolution" value="3.90 A"/>
    <property type="chains" value="A/B=1-1459"/>
</dbReference>
<dbReference type="PDB" id="8EZJ">
    <property type="method" value="EM"/>
    <property type="resolution" value="3.30 A"/>
    <property type="chains" value="A/B=1-1459"/>
</dbReference>
<dbReference type="PDB" id="8EZQ">
    <property type="method" value="EM"/>
    <property type="resolution" value="3.70 A"/>
    <property type="chains" value="A/B=1-1459"/>
</dbReference>
<dbReference type="PDBsum" id="1KU1"/>
<dbReference type="PDBsum" id="7URO"/>
<dbReference type="PDBsum" id="7URR"/>
<dbReference type="PDBsum" id="7UT4"/>
<dbReference type="PDBsum" id="7UTH"/>
<dbReference type="PDBsum" id="8EZJ"/>
<dbReference type="PDBsum" id="8EZQ"/>
<dbReference type="EMDB" id="EMD-28743"/>
<dbReference type="EMDB" id="EMD-28748"/>
<dbReference type="SMR" id="P39993"/>
<dbReference type="BioGRID" id="36707">
    <property type="interactions" value="67"/>
</dbReference>
<dbReference type="DIP" id="DIP-6816N"/>
<dbReference type="FunCoup" id="P39993">
    <property type="interactions" value="1150"/>
</dbReference>
<dbReference type="IntAct" id="P39993">
    <property type="interactions" value="22"/>
</dbReference>
<dbReference type="STRING" id="4932.YEL022W"/>
<dbReference type="CarbonylDB" id="P39993"/>
<dbReference type="GlyGen" id="P39993">
    <property type="glycosylation" value="1 site, 1 O-linked glycan (1 site)"/>
</dbReference>
<dbReference type="iPTMnet" id="P39993"/>
<dbReference type="PaxDb" id="4932-YEL022W"/>
<dbReference type="PeptideAtlas" id="P39993"/>
<dbReference type="EnsemblFungi" id="YEL022W_mRNA">
    <property type="protein sequence ID" value="YEL022W"/>
    <property type="gene ID" value="YEL022W"/>
</dbReference>
<dbReference type="GeneID" id="856691"/>
<dbReference type="KEGG" id="sce:YEL022W"/>
<dbReference type="AGR" id="SGD:S000000748"/>
<dbReference type="SGD" id="S000000748">
    <property type="gene designation" value="GEA2"/>
</dbReference>
<dbReference type="VEuPathDB" id="FungiDB:YEL022W"/>
<dbReference type="eggNOG" id="KOG0928">
    <property type="taxonomic scope" value="Eukaryota"/>
</dbReference>
<dbReference type="GeneTree" id="ENSGT00940000176690"/>
<dbReference type="HOGENOM" id="CLU_001204_0_1_1"/>
<dbReference type="InParanoid" id="P39993"/>
<dbReference type="OMA" id="ILWTRSP"/>
<dbReference type="OrthoDB" id="10258608at2759"/>
<dbReference type="BioCyc" id="YEAST:G3O-30146-MONOMER"/>
<dbReference type="Reactome" id="R-SCE-199992">
    <property type="pathway name" value="trans-Golgi Network Vesicle Budding"/>
</dbReference>
<dbReference type="Reactome" id="R-SCE-5620916">
    <property type="pathway name" value="VxPx cargo-targeting to cilium"/>
</dbReference>
<dbReference type="Reactome" id="R-SCE-6807878">
    <property type="pathway name" value="COPI-mediated anterograde transport"/>
</dbReference>
<dbReference type="Reactome" id="R-SCE-6811434">
    <property type="pathway name" value="COPI-dependent Golgi-to-ER retrograde traffic"/>
</dbReference>
<dbReference type="BioGRID-ORCS" id="856691">
    <property type="hits" value="10 hits in 10 CRISPR screens"/>
</dbReference>
<dbReference type="EvolutionaryTrace" id="P39993"/>
<dbReference type="PRO" id="PR:P39993"/>
<dbReference type="Proteomes" id="UP000002311">
    <property type="component" value="Chromosome V"/>
</dbReference>
<dbReference type="RNAct" id="P39993">
    <property type="molecule type" value="protein"/>
</dbReference>
<dbReference type="GO" id="GO:0005829">
    <property type="term" value="C:cytosol"/>
    <property type="evidence" value="ECO:0007005"/>
    <property type="project" value="SGD"/>
</dbReference>
<dbReference type="GO" id="GO:0000137">
    <property type="term" value="C:Golgi cis cisterna"/>
    <property type="evidence" value="ECO:0000314"/>
    <property type="project" value="SGD"/>
</dbReference>
<dbReference type="GO" id="GO:0000139">
    <property type="term" value="C:Golgi membrane"/>
    <property type="evidence" value="ECO:0007669"/>
    <property type="project" value="UniProtKB-SubCell"/>
</dbReference>
<dbReference type="GO" id="GO:0005085">
    <property type="term" value="F:guanyl-nucleotide exchange factor activity"/>
    <property type="evidence" value="ECO:0000314"/>
    <property type="project" value="SGD"/>
</dbReference>
<dbReference type="GO" id="GO:0030036">
    <property type="term" value="P:actin cytoskeleton organization"/>
    <property type="evidence" value="ECO:0000316"/>
    <property type="project" value="SGD"/>
</dbReference>
<dbReference type="GO" id="GO:0006888">
    <property type="term" value="P:endoplasmic reticulum to Golgi vesicle-mediated transport"/>
    <property type="evidence" value="ECO:0000315"/>
    <property type="project" value="SGD"/>
</dbReference>
<dbReference type="GO" id="GO:0006891">
    <property type="term" value="P:intra-Golgi vesicle-mediated transport"/>
    <property type="evidence" value="ECO:0000315"/>
    <property type="project" value="SGD"/>
</dbReference>
<dbReference type="GO" id="GO:0016236">
    <property type="term" value="P:macroautophagy"/>
    <property type="evidence" value="ECO:0000315"/>
    <property type="project" value="SGD"/>
</dbReference>
<dbReference type="GO" id="GO:0032012">
    <property type="term" value="P:regulation of ARF protein signal transduction"/>
    <property type="evidence" value="ECO:0007669"/>
    <property type="project" value="InterPro"/>
</dbReference>
<dbReference type="GO" id="GO:0006890">
    <property type="term" value="P:retrograde vesicle-mediated transport, Golgi to endoplasmic reticulum"/>
    <property type="evidence" value="ECO:0000316"/>
    <property type="project" value="SGD"/>
</dbReference>
<dbReference type="GO" id="GO:0033363">
    <property type="term" value="P:secretory granule organization"/>
    <property type="evidence" value="ECO:0000315"/>
    <property type="project" value="SGD"/>
</dbReference>
<dbReference type="CDD" id="cd00171">
    <property type="entry name" value="Sec7"/>
    <property type="match status" value="1"/>
</dbReference>
<dbReference type="FunFam" id="1.10.1000.11:FF:000010">
    <property type="entry name" value="ARF guanine-nucleotide exchange factor GNOM-like"/>
    <property type="match status" value="1"/>
</dbReference>
<dbReference type="FunFam" id="1.10.220.20:FF:000007">
    <property type="entry name" value="GDP/GTP exchange factor"/>
    <property type="match status" value="1"/>
</dbReference>
<dbReference type="Gene3D" id="1.10.220.20">
    <property type="match status" value="1"/>
</dbReference>
<dbReference type="Gene3D" id="1.10.1000.11">
    <property type="entry name" value="Arf Nucleotide-binding Site Opener,domain 2"/>
    <property type="match status" value="1"/>
</dbReference>
<dbReference type="InterPro" id="IPR032691">
    <property type="entry name" value="Mon2/Sec7/BIG1-like_HUS"/>
</dbReference>
<dbReference type="InterPro" id="IPR023394">
    <property type="entry name" value="Sec7_C_sf"/>
</dbReference>
<dbReference type="InterPro" id="IPR000904">
    <property type="entry name" value="Sec7_dom"/>
</dbReference>
<dbReference type="InterPro" id="IPR035999">
    <property type="entry name" value="Sec7_dom_sf"/>
</dbReference>
<dbReference type="PANTHER" id="PTHR10663:SF388">
    <property type="entry name" value="GOLGI-SPECIFIC BREFELDIN A-RESISTANCE GUANINE NUCLEOTIDE EXCHANGE FACTOR 1"/>
    <property type="match status" value="1"/>
</dbReference>
<dbReference type="PANTHER" id="PTHR10663">
    <property type="entry name" value="GUANYL-NUCLEOTIDE EXCHANGE FACTOR"/>
    <property type="match status" value="1"/>
</dbReference>
<dbReference type="Pfam" id="PF01369">
    <property type="entry name" value="Sec7"/>
    <property type="match status" value="1"/>
</dbReference>
<dbReference type="Pfam" id="PF12783">
    <property type="entry name" value="Sec7-like_HUS"/>
    <property type="match status" value="1"/>
</dbReference>
<dbReference type="SMART" id="SM00222">
    <property type="entry name" value="Sec7"/>
    <property type="match status" value="1"/>
</dbReference>
<dbReference type="SUPFAM" id="SSF48425">
    <property type="entry name" value="Sec7 domain"/>
    <property type="match status" value="1"/>
</dbReference>
<dbReference type="PROSITE" id="PS50190">
    <property type="entry name" value="SEC7"/>
    <property type="match status" value="1"/>
</dbReference>
<reference key="1">
    <citation type="journal article" date="1997" name="Nature">
        <title>The nucleotide sequence of Saccharomyces cerevisiae chromosome V.</title>
        <authorList>
            <person name="Dietrich F.S."/>
            <person name="Mulligan J.T."/>
            <person name="Hennessy K.M."/>
            <person name="Yelton M.A."/>
            <person name="Allen E."/>
            <person name="Araujo R."/>
            <person name="Aviles E."/>
            <person name="Berno A."/>
            <person name="Brennan T."/>
            <person name="Carpenter J."/>
            <person name="Chen E."/>
            <person name="Cherry J.M."/>
            <person name="Chung E."/>
            <person name="Duncan M."/>
            <person name="Guzman E."/>
            <person name="Hartzell G."/>
            <person name="Hunicke-Smith S."/>
            <person name="Hyman R.W."/>
            <person name="Kayser A."/>
            <person name="Komp C."/>
            <person name="Lashkari D."/>
            <person name="Lew H."/>
            <person name="Lin D."/>
            <person name="Mosedale D."/>
            <person name="Nakahara K."/>
            <person name="Namath A."/>
            <person name="Norgren R."/>
            <person name="Oefner P."/>
            <person name="Oh C."/>
            <person name="Petel F.X."/>
            <person name="Roberts D."/>
            <person name="Sehl P."/>
            <person name="Schramm S."/>
            <person name="Shogren T."/>
            <person name="Smith V."/>
            <person name="Taylor P."/>
            <person name="Wei Y."/>
            <person name="Botstein D."/>
            <person name="Davis R.W."/>
        </authorList>
    </citation>
    <scope>NUCLEOTIDE SEQUENCE [LARGE SCALE GENOMIC DNA]</scope>
    <source>
        <strain>ATCC 204508 / S288c</strain>
    </source>
</reference>
<reference key="2">
    <citation type="journal article" date="2014" name="G3 (Bethesda)">
        <title>The reference genome sequence of Saccharomyces cerevisiae: Then and now.</title>
        <authorList>
            <person name="Engel S.R."/>
            <person name="Dietrich F.S."/>
            <person name="Fisk D.G."/>
            <person name="Binkley G."/>
            <person name="Balakrishnan R."/>
            <person name="Costanzo M.C."/>
            <person name="Dwight S.S."/>
            <person name="Hitz B.C."/>
            <person name="Karra K."/>
            <person name="Nash R.S."/>
            <person name="Weng S."/>
            <person name="Wong E.D."/>
            <person name="Lloyd P."/>
            <person name="Skrzypek M.S."/>
            <person name="Miyasato S.R."/>
            <person name="Simison M."/>
            <person name="Cherry J.M."/>
        </authorList>
    </citation>
    <scope>GENOME REANNOTATION</scope>
    <source>
        <strain>ATCC 204508 / S288c</strain>
    </source>
</reference>
<reference key="3">
    <citation type="journal article" date="1996" name="Nature">
        <title>Nucleotide exchange on ARF mediated by yeast Gea1 protein.</title>
        <authorList>
            <person name="Peyroche A."/>
            <person name="Paris S."/>
            <person name="Jackson C.L."/>
        </authorList>
    </citation>
    <scope>CHARACTERIZATION</scope>
</reference>
<reference key="4">
    <citation type="journal article" date="2003" name="Mol. Biol. Cell">
        <title>A novel Golgi membrane protein is a partner of the ARF exchange factors Gea1p and Gea2p.</title>
        <authorList>
            <person name="Chantalat S."/>
            <person name="Courbeyrette R."/>
            <person name="Senic-Matuglia F."/>
            <person name="Jackson C.L."/>
            <person name="Goud B."/>
            <person name="Peyroche A."/>
        </authorList>
    </citation>
    <scope>INTERACTION WITH GMH1</scope>
    <scope>SUBCELLULAR LOCATION</scope>
</reference>
<reference key="5">
    <citation type="journal article" date="2003" name="Nature">
        <title>Global analysis of protein expression in yeast.</title>
        <authorList>
            <person name="Ghaemmaghami S."/>
            <person name="Huh W.-K."/>
            <person name="Bower K."/>
            <person name="Howson R.W."/>
            <person name="Belle A."/>
            <person name="Dephoure N."/>
            <person name="O'Shea E.K."/>
            <person name="Weissman J.S."/>
        </authorList>
    </citation>
    <scope>LEVEL OF PROTEIN EXPRESSION [LARGE SCALE ANALYSIS]</scope>
</reference>
<reference key="6">
    <citation type="journal article" date="2004" name="J. Cell Sci.">
        <title>The Arf activator Gea2p and the P-type ATPase Drs2p interact at the Golgi in Saccharomyces cerevisiae.</title>
        <authorList>
            <person name="Chantalat S."/>
            <person name="Park S.K."/>
            <person name="Hua Z."/>
            <person name="Liu K."/>
            <person name="Gobin R."/>
            <person name="Peyroche A."/>
            <person name="Rambourg A."/>
            <person name="Graham T.R."/>
            <person name="Jackson C.L."/>
        </authorList>
    </citation>
    <scope>INTERACTION WITH DRS2</scope>
    <scope>SUBCELLULAR LOCATION</scope>
    <scope>DISRUPTION PHENOTYPE</scope>
    <scope>MUTAGENESIS OF VAL-698</scope>
</reference>
<reference key="7">
    <citation type="journal article" date="2007" name="J. Proteome Res.">
        <title>Large-scale phosphorylation analysis of alpha-factor-arrested Saccharomyces cerevisiae.</title>
        <authorList>
            <person name="Li X."/>
            <person name="Gerber S.A."/>
            <person name="Rudner A.D."/>
            <person name="Beausoleil S.A."/>
            <person name="Haas W."/>
            <person name="Villen J."/>
            <person name="Elias J.E."/>
            <person name="Gygi S.P."/>
        </authorList>
    </citation>
    <scope>PHOSPHORYLATION [LARGE SCALE ANALYSIS] AT SER-284</scope>
    <scope>IDENTIFICATION BY MASS SPECTROMETRY [LARGE SCALE ANALYSIS]</scope>
    <source>
        <strain>ADR376</strain>
    </source>
</reference>
<reference key="8">
    <citation type="journal article" date="2008" name="Mol. Cell. Proteomics">
        <title>A multidimensional chromatography technology for in-depth phosphoproteome analysis.</title>
        <authorList>
            <person name="Albuquerque C.P."/>
            <person name="Smolka M.B."/>
            <person name="Payne S.H."/>
            <person name="Bafna V."/>
            <person name="Eng J."/>
            <person name="Zhou H."/>
        </authorList>
    </citation>
    <scope>PHOSPHORYLATION [LARGE SCALE ANALYSIS] AT SER-46 AND SER-284</scope>
    <scope>IDENTIFICATION BY MASS SPECTROMETRY [LARGE SCALE ANALYSIS]</scope>
</reference>
<reference key="9">
    <citation type="journal article" date="2009" name="Nat. Cell Biol.">
        <title>Regulation of a Golgi flippase by phosphoinositides and an ArfGEF.</title>
        <authorList>
            <person name="Natarajan P."/>
            <person name="Liu K."/>
            <person name="Patil D.V."/>
            <person name="Sciorra V.A."/>
            <person name="Jackson C.L."/>
            <person name="Graham T.R."/>
        </authorList>
    </citation>
    <scope>FUNCTION</scope>
    <scope>MUTAGENESIS OF VAL-698</scope>
</reference>
<reference key="10">
    <citation type="journal article" date="2009" name="Science">
        <title>Global analysis of Cdk1 substrate phosphorylation sites provides insights into evolution.</title>
        <authorList>
            <person name="Holt L.J."/>
            <person name="Tuch B.B."/>
            <person name="Villen J."/>
            <person name="Johnson A.D."/>
            <person name="Gygi S.P."/>
            <person name="Morgan D.O."/>
        </authorList>
    </citation>
    <scope>PHOSPHORYLATION [LARGE SCALE ANALYSIS] AT SER-284</scope>
    <scope>IDENTIFICATION BY MASS SPECTROMETRY [LARGE SCALE ANALYSIS]</scope>
</reference>
<reference key="11">
    <citation type="journal article" date="2014" name="EMBO J.">
        <title>The small GTPase Arf1 modulates mitochondrial morphology and function.</title>
        <authorList>
            <person name="Ackema K.B."/>
            <person name="Hench J."/>
            <person name="Boeckler S."/>
            <person name="Wang S.C."/>
            <person name="Sauder U."/>
            <person name="Mergentaler H."/>
            <person name="Westermann B."/>
            <person name="Bard F."/>
            <person name="Frank S."/>
            <person name="Spang A."/>
        </authorList>
    </citation>
    <scope>FUNCTION</scope>
</reference>
<reference key="12">
    <citation type="journal article" date="2002" name="Biochemistry">
        <title>Mechanism of domain closure of Sec7 domains and role in BFA sensitivity.</title>
        <authorList>
            <person name="Renault L."/>
            <person name="Christova P."/>
            <person name="Guibert B."/>
            <person name="Pasqualato S."/>
            <person name="Cherfils J."/>
        </authorList>
    </citation>
    <scope>X-RAY CRYSTALLOGRAPHY (1.93 ANGSTROMS) OF 558-766 IN COMPLEX WITH GDP AND SEC7</scope>
</reference>
<gene>
    <name type="primary">GEA2</name>
    <name type="ordered locus">YEL022W</name>
</gene>
<comment type="function">
    <text evidence="7 8">Activates the ARF proteins by exchanging bound GDP for free GTP. Plays a role in maintaining mitochondrial morphology (PubMed:25190516). Stimulates DRS2 flippase activity (PubMed:19898464).</text>
</comment>
<comment type="subunit">
    <text evidence="3 4 6">Interacts (via SEC7 domain) with DRS2 (via C-terminus); the interaction is direct (PubMed:14734650). Interacts with GMH1 (PubMed:11888276, PubMed:12808035).</text>
</comment>
<comment type="subcellular location">
    <subcellularLocation>
        <location evidence="4 6">Cytoplasm</location>
        <location evidence="4 6">Cytosol</location>
    </subcellularLocation>
    <subcellularLocation>
        <location evidence="4">Membrane</location>
        <topology evidence="4">Peripheral membrane protein</topology>
    </subcellularLocation>
    <subcellularLocation>
        <location evidence="6">Golgi apparatus membrane</location>
        <topology evidence="4">Peripheral membrane protein</topology>
    </subcellularLocation>
    <text evidence="4 6">Soluble and partially membrane-bound (PubMed:12808035, PubMed:14734650). Associates with early and late Golgi compartments (PubMed:14734650).</text>
</comment>
<comment type="disruption phenotype">
    <text evidence="6">Exacerbates the cold sensitivity of a DRS2-knockout.</text>
</comment>
<comment type="miscellaneous">
    <text evidence="5">Present with 7700 molecules/cell in log phase SD medium.</text>
</comment>
<sequence>MSDREFVTVDPVTIIIKECINLSTAMRKYSKFTSQSGVAALLGGGSEIFSNQDDYLAHTFNNLNTNKHNDPFLSGFIQLRLMLNKLKNLDNIDSLTILQPFLLIVSTSSISGYITSLALDSLQKFFTLNIINESSQNYIGAHRATVNALTHCRFEGSQQLSDDSVLLKVVFLLRSIVDSPYGDLLSNSIIYDVLQTILSLACNNRRSEVLRNAAQSTMIAVTVKIFSKLKTIEPVNVNQIYINDESYTNDVLKADTIGTNVESKEEGSQEDPIGMKVNNEEAISEDDGIEEEHIHSEKSTNGAEQLDIVQKTTRSNSRIQAYADDNYGLPVVRQYLNLLLSLIAPENELKHSYSTRIFGLELIQTALEISGDRLQLYPRLFTLISDPIFKSILFIIQNTTKLSLLQATLQLFTTLVVILGNNLQLQIELTLTRIFSILLDDGTANNSSSENKNKPSIIKELLIEQISILWTRSPSFFTSTFINFDCNLDRADVSINFLKALTKLALPESALTTTESVPPICLEGLVSLVDDMFDHMKDIDREEFGRQKNEMEILKKRDRKTEFIECTNAFNEKPKKGIPMLIEKGFIASDSDKDIAEFLFNNNNRMNKKTIGLLLCHPDKVSLLNEYIRLFDFSGLRVDEAIRILLTKFRLPGESQQIERIIEAFSSAYCENQDYDPSKISDNAEDDISTVQPDADSVFILSYSIIMLNTDLHNPQVKEHMSFEDYSGNLKGCCNHKDFPFWYLDRIYCSIRDKEIVMPEEHHGNEKWFEDAWNNLISSTTVITEIKKDTQSVMDKLTPLELLNFDRAIFKQVGPSIVSTLFNIYVVASDDHISTRMITSLDKCSYISAFFDFKDLFNDILNSIAKGTTLINSSHDDELSTLAFEYGPMPLVQIKFEDTNTEIPVSTDAVRFGRSFKGQLNTVVFFRIIRRNKDPKIFSKELWLNIVNIILTLYEDLILSPDIFPDLQKRLKLSNLPKPSPEISINKSKESKGLLSTFASYLKGDEEPTEEEIKSSKKAMECIKSSNIAASVFGNESNITADLIKTLLDSAKTEKNADNSRYFEAELLFIIELTIALFLFCKEEKELGKFILQKVFQLSHTKGLTKRTVRRMLTYKILLISLCADQTEYLSKLINDELLKKGDIFTQKFFATNQGKEFLKRLFSLTESEFYRGFLLGNENFWKFLRKVTAMKEQSESIFEYLNESIKTDSNILTNENFMWVLGLLDEISSMGAVGNHWEIEYKKLTESGHKIDKENPYKKSIELSLKSIQLTSHLLEDNNDLRKNEIFAIIQALAHQCINPCKQISEFAVVTLEQTLINKIEIPTNEMESVEELIEGGLLPLLNSSETQEDQKILISSILTIISNVYLHYLKLGKTSNETFLKILSIFNKFVEDSDIEKKLQQLILDKKSIEKGNGSSSHGSAHEQTPESNDVEIEATAPIDDNTDDDNKPKLSDVEKD</sequence>
<keyword id="KW-0002">3D-structure</keyword>
<keyword id="KW-0963">Cytoplasm</keyword>
<keyword id="KW-0333">Golgi apparatus</keyword>
<keyword id="KW-0344">Guanine-nucleotide releasing factor</keyword>
<keyword id="KW-0472">Membrane</keyword>
<keyword id="KW-0597">Phosphoprotein</keyword>
<keyword id="KW-1185">Reference proteome</keyword>
<feature type="chain" id="PRO_0000120213" description="ARF guanine-nucleotide exchange factor 2">
    <location>
        <begin position="1"/>
        <end position="1459"/>
    </location>
</feature>
<feature type="domain" description="SEC7" evidence="1">
    <location>
        <begin position="570"/>
        <end position="714"/>
    </location>
</feature>
<feature type="region of interest" description="Disordered" evidence="2">
    <location>
        <begin position="1412"/>
        <end position="1459"/>
    </location>
</feature>
<feature type="compositionally biased region" description="Basic and acidic residues" evidence="2">
    <location>
        <begin position="1447"/>
        <end position="1459"/>
    </location>
</feature>
<feature type="modified residue" description="Phosphoserine" evidence="10">
    <location>
        <position position="46"/>
    </location>
</feature>
<feature type="modified residue" description="Phosphoserine" evidence="9 10 11">
    <location>
        <position position="284"/>
    </location>
</feature>
<feature type="mutagenesis site" description="Abolishes interaction with DRS2 and decreases DRS2 phosphatidylserine flippase activity in the trans-Golgi network membrane. Abnormal secretory vesicle formation." evidence="6">
    <original>V</original>
    <variation>G</variation>
    <location>
        <position position="698"/>
    </location>
</feature>
<feature type="helix" evidence="13">
    <location>
        <begin position="11"/>
        <end position="29"/>
    </location>
</feature>
<feature type="helix" evidence="13">
    <location>
        <begin position="71"/>
        <end position="84"/>
    </location>
</feature>
<feature type="helix" evidence="13">
    <location>
        <begin position="94"/>
        <end position="106"/>
    </location>
</feature>
<feature type="helix" evidence="13">
    <location>
        <begin position="112"/>
        <end position="128"/>
    </location>
</feature>
<feature type="helix" evidence="13">
    <location>
        <begin position="138"/>
        <end position="150"/>
    </location>
</feature>
<feature type="helix" evidence="13">
    <location>
        <begin position="159"/>
        <end position="178"/>
    </location>
</feature>
<feature type="helix" evidence="13">
    <location>
        <begin position="180"/>
        <end position="183"/>
    </location>
</feature>
<feature type="helix" evidence="13">
    <location>
        <begin position="187"/>
        <end position="201"/>
    </location>
</feature>
<feature type="helix" evidence="13">
    <location>
        <begin position="208"/>
        <end position="230"/>
    </location>
</feature>
<feature type="strand" evidence="13">
    <location>
        <begin position="235"/>
        <end position="239"/>
    </location>
</feature>
<feature type="strand" evidence="13">
    <location>
        <begin position="247"/>
        <end position="249"/>
    </location>
</feature>
<feature type="strand" evidence="13">
    <location>
        <begin position="323"/>
        <end position="326"/>
    </location>
</feature>
<feature type="helix" evidence="13">
    <location>
        <begin position="329"/>
        <end position="343"/>
    </location>
</feature>
<feature type="helix" evidence="13">
    <location>
        <begin position="345"/>
        <end position="347"/>
    </location>
</feature>
<feature type="helix" evidence="13">
    <location>
        <begin position="353"/>
        <end position="370"/>
    </location>
</feature>
<feature type="turn" evidence="13">
    <location>
        <begin position="372"/>
        <end position="376"/>
    </location>
</feature>
<feature type="helix" evidence="13">
    <location>
        <begin position="378"/>
        <end position="385"/>
    </location>
</feature>
<feature type="helix" evidence="13">
    <location>
        <begin position="387"/>
        <end position="397"/>
    </location>
</feature>
<feature type="helix" evidence="13">
    <location>
        <begin position="402"/>
        <end position="418"/>
    </location>
</feature>
<feature type="helix" evidence="13">
    <location>
        <begin position="420"/>
        <end position="422"/>
    </location>
</feature>
<feature type="helix" evidence="13">
    <location>
        <begin position="424"/>
        <end position="438"/>
    </location>
</feature>
<feature type="helix" evidence="13">
    <location>
        <begin position="456"/>
        <end position="471"/>
    </location>
</feature>
<feature type="strand" evidence="13">
    <location>
        <begin position="472"/>
        <end position="475"/>
    </location>
</feature>
<feature type="helix" evidence="13">
    <location>
        <begin position="476"/>
        <end position="483"/>
    </location>
</feature>
<feature type="turn" evidence="13">
    <location>
        <begin position="484"/>
        <end position="486"/>
    </location>
</feature>
<feature type="helix" evidence="13">
    <location>
        <begin position="494"/>
        <end position="505"/>
    </location>
</feature>
<feature type="helix" evidence="13">
    <location>
        <begin position="507"/>
        <end position="510"/>
    </location>
</feature>
<feature type="helix" evidence="13">
    <location>
        <begin position="517"/>
        <end position="534"/>
    </location>
</feature>
<feature type="helix" evidence="13">
    <location>
        <begin position="541"/>
        <end position="545"/>
    </location>
</feature>
<feature type="helix" evidence="13">
    <location>
        <begin position="552"/>
        <end position="557"/>
    </location>
</feature>
<feature type="helix" evidence="12">
    <location>
        <begin position="558"/>
        <end position="572"/>
    </location>
</feature>
<feature type="helix" evidence="12">
    <location>
        <begin position="574"/>
        <end position="583"/>
    </location>
</feature>
<feature type="strand" evidence="12">
    <location>
        <begin position="586"/>
        <end position="588"/>
    </location>
</feature>
<feature type="helix" evidence="12">
    <location>
        <begin position="592"/>
        <end position="601"/>
    </location>
</feature>
<feature type="turn" evidence="12">
    <location>
        <begin position="602"/>
        <end position="605"/>
    </location>
</feature>
<feature type="helix" evidence="12">
    <location>
        <begin position="608"/>
        <end position="615"/>
    </location>
</feature>
<feature type="helix" evidence="12">
    <location>
        <begin position="618"/>
        <end position="620"/>
    </location>
</feature>
<feature type="helix" evidence="12">
    <location>
        <begin position="621"/>
        <end position="629"/>
    </location>
</feature>
<feature type="helix" evidence="12">
    <location>
        <begin position="638"/>
        <end position="645"/>
    </location>
</feature>
<feature type="turn" evidence="12">
    <location>
        <begin position="646"/>
        <end position="648"/>
    </location>
</feature>
<feature type="helix" evidence="12">
    <location>
        <begin position="655"/>
        <end position="671"/>
    </location>
</feature>
<feature type="helix" evidence="12">
    <location>
        <begin position="677"/>
        <end position="679"/>
    </location>
</feature>
<feature type="helix" evidence="12">
    <location>
        <begin position="688"/>
        <end position="690"/>
    </location>
</feature>
<feature type="helix" evidence="12">
    <location>
        <begin position="695"/>
        <end position="712"/>
    </location>
</feature>
<feature type="strand" evidence="13">
    <location>
        <begin position="717"/>
        <end position="719"/>
    </location>
</feature>
<feature type="helix" evidence="12">
    <location>
        <begin position="723"/>
        <end position="729"/>
    </location>
</feature>
<feature type="turn" evidence="12">
    <location>
        <begin position="730"/>
        <end position="732"/>
    </location>
</feature>
<feature type="helix" evidence="12">
    <location>
        <begin position="741"/>
        <end position="753"/>
    </location>
</feature>
<feature type="strand" evidence="13">
    <location>
        <begin position="764"/>
        <end position="767"/>
    </location>
</feature>
<feature type="helix" evidence="13">
    <location>
        <begin position="769"/>
        <end position="776"/>
    </location>
</feature>
<feature type="turn" evidence="13">
    <location>
        <begin position="777"/>
        <end position="781"/>
    </location>
</feature>
<feature type="strand" evidence="13">
    <location>
        <begin position="782"/>
        <end position="784"/>
    </location>
</feature>
<feature type="helix" evidence="13">
    <location>
        <begin position="794"/>
        <end position="796"/>
    </location>
</feature>
<feature type="helix" evidence="13">
    <location>
        <begin position="799"/>
        <end position="827"/>
    </location>
</feature>
<feature type="helix" evidence="13">
    <location>
        <begin position="831"/>
        <end position="851"/>
    </location>
</feature>
<feature type="helix" evidence="13">
    <location>
        <begin position="854"/>
        <end position="866"/>
    </location>
</feature>
<feature type="strand" evidence="13">
    <location>
        <begin position="869"/>
        <end position="871"/>
    </location>
</feature>
<feature type="strand" evidence="13">
    <location>
        <begin position="892"/>
        <end position="894"/>
    </location>
</feature>
<feature type="strand" evidence="13">
    <location>
        <begin position="897"/>
        <end position="900"/>
    </location>
</feature>
<feature type="strand" evidence="13">
    <location>
        <begin position="903"/>
        <end position="905"/>
    </location>
</feature>
<feature type="helix" evidence="13">
    <location>
        <begin position="907"/>
        <end position="913"/>
    </location>
</feature>
<feature type="helix" evidence="13">
    <location>
        <begin position="916"/>
        <end position="931"/>
    </location>
</feature>
<feature type="helix" evidence="13">
    <location>
        <begin position="940"/>
        <end position="955"/>
    </location>
</feature>
<feature type="helix" evidence="13">
    <location>
        <begin position="965"/>
        <end position="970"/>
    </location>
</feature>
<feature type="strand" evidence="13">
    <location>
        <begin position="999"/>
        <end position="1001"/>
    </location>
</feature>
<feature type="helix" evidence="13">
    <location>
        <begin position="1011"/>
        <end position="1025"/>
    </location>
</feature>
<feature type="helix" evidence="13">
    <location>
        <begin position="1028"/>
        <end position="1032"/>
    </location>
</feature>
<feature type="turn" evidence="13">
    <location>
        <begin position="1033"/>
        <end position="1035"/>
    </location>
</feature>
<feature type="strand" evidence="13">
    <location>
        <begin position="1036"/>
        <end position="1038"/>
    </location>
</feature>
<feature type="helix" evidence="13">
    <location>
        <begin position="1041"/>
        <end position="1049"/>
    </location>
</feature>
<feature type="helix" evidence="13">
    <location>
        <begin position="1060"/>
        <end position="1062"/>
    </location>
</feature>
<feature type="helix" evidence="13">
    <location>
        <begin position="1063"/>
        <end position="1080"/>
    </location>
</feature>
<feature type="helix" evidence="13">
    <location>
        <begin position="1085"/>
        <end position="1099"/>
    </location>
</feature>
<feature type="helix" evidence="13">
    <location>
        <begin position="1106"/>
        <end position="1122"/>
    </location>
</feature>
<feature type="strand" evidence="13">
    <location>
        <begin position="1123"/>
        <end position="1125"/>
    </location>
</feature>
<feature type="helix" evidence="13">
    <location>
        <begin position="1127"/>
        <end position="1140"/>
    </location>
</feature>
<feature type="strand" evidence="13">
    <location>
        <begin position="1143"/>
        <end position="1145"/>
    </location>
</feature>
<feature type="helix" evidence="13">
    <location>
        <begin position="1148"/>
        <end position="1150"/>
    </location>
</feature>
<feature type="strand" evidence="13">
    <location>
        <begin position="1151"/>
        <end position="1154"/>
    </location>
</feature>
<feature type="helix" evidence="13">
    <location>
        <begin position="1155"/>
        <end position="1165"/>
    </location>
</feature>
<feature type="strand" evidence="13">
    <location>
        <begin position="1167"/>
        <end position="1170"/>
    </location>
</feature>
<feature type="helix" evidence="13">
    <location>
        <begin position="1173"/>
        <end position="1176"/>
    </location>
</feature>
<feature type="helix" evidence="13">
    <location>
        <begin position="1180"/>
        <end position="1189"/>
    </location>
</feature>
<feature type="turn" evidence="13">
    <location>
        <begin position="1192"/>
        <end position="1194"/>
    </location>
</feature>
<feature type="helix" evidence="13">
    <location>
        <begin position="1195"/>
        <end position="1208"/>
    </location>
</feature>
<feature type="helix" evidence="13">
    <location>
        <begin position="1218"/>
        <end position="1229"/>
    </location>
</feature>
<feature type="helix" evidence="13">
    <location>
        <begin position="1232"/>
        <end position="1246"/>
    </location>
</feature>
<feature type="turn" evidence="13">
    <location>
        <begin position="1247"/>
        <end position="1249"/>
    </location>
</feature>
<feature type="helix" evidence="13">
    <location>
        <begin position="1259"/>
        <end position="1275"/>
    </location>
</feature>
<feature type="helix" evidence="13">
    <location>
        <begin position="1285"/>
        <end position="1298"/>
    </location>
</feature>
<feature type="helix" evidence="13">
    <location>
        <begin position="1303"/>
        <end position="1319"/>
    </location>
</feature>
<feature type="helix" evidence="13">
    <location>
        <begin position="1331"/>
        <end position="1337"/>
    </location>
</feature>
<feature type="helix" evidence="13">
    <location>
        <begin position="1339"/>
        <end position="1343"/>
    </location>
</feature>
<feature type="helix" evidence="13">
    <location>
        <begin position="1349"/>
        <end position="1351"/>
    </location>
</feature>
<feature type="helix" evidence="13">
    <location>
        <begin position="1352"/>
        <end position="1372"/>
    </location>
</feature>
<feature type="helix" evidence="13">
    <location>
        <begin position="1379"/>
        <end position="1390"/>
    </location>
</feature>
<feature type="turn" evidence="13">
    <location>
        <begin position="1393"/>
        <end position="1395"/>
    </location>
</feature>
<feature type="helix" evidence="13">
    <location>
        <begin position="1396"/>
        <end position="1416"/>
    </location>
</feature>
<name>GEA2_YEAST</name>
<organism>
    <name type="scientific">Saccharomyces cerevisiae (strain ATCC 204508 / S288c)</name>
    <name type="common">Baker's yeast</name>
    <dbReference type="NCBI Taxonomy" id="559292"/>
    <lineage>
        <taxon>Eukaryota</taxon>
        <taxon>Fungi</taxon>
        <taxon>Dikarya</taxon>
        <taxon>Ascomycota</taxon>
        <taxon>Saccharomycotina</taxon>
        <taxon>Saccharomycetes</taxon>
        <taxon>Saccharomycetales</taxon>
        <taxon>Saccharomycetaceae</taxon>
        <taxon>Saccharomyces</taxon>
    </lineage>
</organism>
<evidence type="ECO:0000255" key="1">
    <source>
        <dbReference type="PROSITE-ProRule" id="PRU00189"/>
    </source>
</evidence>
<evidence type="ECO:0000256" key="2">
    <source>
        <dbReference type="SAM" id="MobiDB-lite"/>
    </source>
</evidence>
<evidence type="ECO:0000269" key="3">
    <source>
    </source>
</evidence>
<evidence type="ECO:0000269" key="4">
    <source>
    </source>
</evidence>
<evidence type="ECO:0000269" key="5">
    <source>
    </source>
</evidence>
<evidence type="ECO:0000269" key="6">
    <source>
    </source>
</evidence>
<evidence type="ECO:0000269" key="7">
    <source>
    </source>
</evidence>
<evidence type="ECO:0000269" key="8">
    <source>
    </source>
</evidence>
<evidence type="ECO:0007744" key="9">
    <source>
    </source>
</evidence>
<evidence type="ECO:0007744" key="10">
    <source>
    </source>
</evidence>
<evidence type="ECO:0007744" key="11">
    <source>
    </source>
</evidence>
<evidence type="ECO:0007829" key="12">
    <source>
        <dbReference type="PDB" id="1KU1"/>
    </source>
</evidence>
<evidence type="ECO:0007829" key="13">
    <source>
        <dbReference type="PDB" id="8EZJ"/>
    </source>
</evidence>
<proteinExistence type="evidence at protein level"/>
<accession>P39993</accession>
<accession>D3DLM6</accession>
<protein>
    <recommendedName>
        <fullName>ARF guanine-nucleotide exchange factor 2</fullName>
    </recommendedName>
</protein>